<reference key="1">
    <citation type="journal article" date="2008" name="J. Bacteriol.">
        <title>The pangenome structure of Escherichia coli: comparative genomic analysis of E. coli commensal and pathogenic isolates.</title>
        <authorList>
            <person name="Rasko D.A."/>
            <person name="Rosovitz M.J."/>
            <person name="Myers G.S.A."/>
            <person name="Mongodin E.F."/>
            <person name="Fricke W.F."/>
            <person name="Gajer P."/>
            <person name="Crabtree J."/>
            <person name="Sebaihia M."/>
            <person name="Thomson N.R."/>
            <person name="Chaudhuri R."/>
            <person name="Henderson I.R."/>
            <person name="Sperandio V."/>
            <person name="Ravel J."/>
        </authorList>
    </citation>
    <scope>NUCLEOTIDE SEQUENCE [LARGE SCALE GENOMIC DNA]</scope>
    <source>
        <strain>E24377A / ETEC</strain>
    </source>
</reference>
<organism>
    <name type="scientific">Escherichia coli O139:H28 (strain E24377A / ETEC)</name>
    <dbReference type="NCBI Taxonomy" id="331111"/>
    <lineage>
        <taxon>Bacteria</taxon>
        <taxon>Pseudomonadati</taxon>
        <taxon>Pseudomonadota</taxon>
        <taxon>Gammaproteobacteria</taxon>
        <taxon>Enterobacterales</taxon>
        <taxon>Enterobacteriaceae</taxon>
        <taxon>Escherichia</taxon>
    </lineage>
</organism>
<keyword id="KW-0413">Isomerase</keyword>
<keyword id="KW-1185">Reference proteome</keyword>
<sequence>MTPFMTEDFLLDTEFARRLYHDYAKDQPIFDYHCHLPPQQIAEDYRFKNLYDIWLKGDHYKWRAMRTNGVAERLCTGDASDREKFDAWAATVPHTIGNPLYHWTHLELRRPFGITGKLLSPSTADEIWNECNELLAQDNFSARGIMQQMNVKMVGTTDDPIDSLEHHAEIAKDGSFTIKVLPSWRPDKAFNIEQATFNDYMAKLGEVSDTDIRRFADLQTALTKRLDHFAAHGCKVSDHALDVVMFAEANEAELDSILARRLAGETLSEHEVAQFKTAVLVFLGAEYARRGWVQQYHIGALRNNNLRQFKLLGPDVGFDSINDRPMAEELSKLLSKQNEENLLPKTILYCLNPRDNEVLGTMIGNFQGEGMPGKMQFGSGWWFNDQKDGMERQMTQLAQLGLLSRFVGMLTDSRSFLSYTRHEYFRRILCQMIGRWVEAGEAPADINLLGEMVKNICFNNARDYFAIELN</sequence>
<comment type="catalytic activity">
    <reaction evidence="1">
        <text>D-glucuronate = D-fructuronate</text>
        <dbReference type="Rhea" id="RHEA:13049"/>
        <dbReference type="ChEBI" id="CHEBI:58720"/>
        <dbReference type="ChEBI" id="CHEBI:59863"/>
        <dbReference type="EC" id="5.3.1.12"/>
    </reaction>
</comment>
<comment type="catalytic activity">
    <reaction evidence="1">
        <text>aldehydo-D-galacturonate = keto-D-tagaturonate</text>
        <dbReference type="Rhea" id="RHEA:27702"/>
        <dbReference type="ChEBI" id="CHEBI:12952"/>
        <dbReference type="ChEBI" id="CHEBI:17886"/>
        <dbReference type="EC" id="5.3.1.12"/>
    </reaction>
</comment>
<comment type="pathway">
    <text evidence="1">Carbohydrate metabolism; pentose and glucuronate interconversion.</text>
</comment>
<comment type="similarity">
    <text evidence="1">Belongs to the metallo-dependent hydrolases superfamily. Uronate isomerase family.</text>
</comment>
<dbReference type="EC" id="5.3.1.12" evidence="1"/>
<dbReference type="EMBL" id="CP000800">
    <property type="protein sequence ID" value="ABV17042.1"/>
    <property type="molecule type" value="Genomic_DNA"/>
</dbReference>
<dbReference type="RefSeq" id="WP_000187442.1">
    <property type="nucleotide sequence ID" value="NC_009801.1"/>
</dbReference>
<dbReference type="SMR" id="A7ZRX6"/>
<dbReference type="GeneID" id="93778895"/>
<dbReference type="KEGG" id="ecw:EcE24377A_3560"/>
<dbReference type="HOGENOM" id="CLU_044465_1_0_6"/>
<dbReference type="UniPathway" id="UPA00246"/>
<dbReference type="Proteomes" id="UP000001122">
    <property type="component" value="Chromosome"/>
</dbReference>
<dbReference type="GO" id="GO:0008880">
    <property type="term" value="F:glucuronate isomerase activity"/>
    <property type="evidence" value="ECO:0007669"/>
    <property type="project" value="UniProtKB-UniRule"/>
</dbReference>
<dbReference type="GO" id="GO:0019698">
    <property type="term" value="P:D-galacturonate catabolic process"/>
    <property type="evidence" value="ECO:0007669"/>
    <property type="project" value="TreeGrafter"/>
</dbReference>
<dbReference type="GO" id="GO:0042840">
    <property type="term" value="P:D-glucuronate catabolic process"/>
    <property type="evidence" value="ECO:0007669"/>
    <property type="project" value="TreeGrafter"/>
</dbReference>
<dbReference type="FunFam" id="1.10.2020.10:FF:000001">
    <property type="entry name" value="Uronate isomerase"/>
    <property type="match status" value="1"/>
</dbReference>
<dbReference type="Gene3D" id="3.20.20.140">
    <property type="entry name" value="Metal-dependent hydrolases"/>
    <property type="match status" value="1"/>
</dbReference>
<dbReference type="Gene3D" id="1.10.2020.10">
    <property type="entry name" value="uronate isomerase, domain 2, chain A"/>
    <property type="match status" value="1"/>
</dbReference>
<dbReference type="HAMAP" id="MF_00675">
    <property type="entry name" value="UxaC"/>
    <property type="match status" value="1"/>
</dbReference>
<dbReference type="InterPro" id="IPR032466">
    <property type="entry name" value="Metal_Hydrolase"/>
</dbReference>
<dbReference type="InterPro" id="IPR003766">
    <property type="entry name" value="Uronate_isomerase"/>
</dbReference>
<dbReference type="NCBIfam" id="NF002794">
    <property type="entry name" value="PRK02925.1"/>
    <property type="match status" value="1"/>
</dbReference>
<dbReference type="PANTHER" id="PTHR30068">
    <property type="entry name" value="URONATE ISOMERASE"/>
    <property type="match status" value="1"/>
</dbReference>
<dbReference type="PANTHER" id="PTHR30068:SF4">
    <property type="entry name" value="URONATE ISOMERASE"/>
    <property type="match status" value="1"/>
</dbReference>
<dbReference type="Pfam" id="PF02614">
    <property type="entry name" value="UxaC"/>
    <property type="match status" value="1"/>
</dbReference>
<dbReference type="SUPFAM" id="SSF51556">
    <property type="entry name" value="Metallo-dependent hydrolases"/>
    <property type="match status" value="1"/>
</dbReference>
<protein>
    <recommendedName>
        <fullName evidence="1">Uronate isomerase</fullName>
        <ecNumber evidence="1">5.3.1.12</ecNumber>
    </recommendedName>
    <alternativeName>
        <fullName evidence="1">Glucuronate isomerase</fullName>
    </alternativeName>
    <alternativeName>
        <fullName evidence="1">Uronic isomerase</fullName>
    </alternativeName>
</protein>
<evidence type="ECO:0000255" key="1">
    <source>
        <dbReference type="HAMAP-Rule" id="MF_00675"/>
    </source>
</evidence>
<name>UXAC_ECO24</name>
<gene>
    <name evidence="1" type="primary">uxaC</name>
    <name type="ordered locus">EcE24377A_3560</name>
</gene>
<accession>A7ZRX6</accession>
<feature type="chain" id="PRO_1000061950" description="Uronate isomerase">
    <location>
        <begin position="1"/>
        <end position="470"/>
    </location>
</feature>
<proteinExistence type="inferred from homology"/>